<comment type="function">
    <text evidence="1">Binds to the 23S rRNA.</text>
</comment>
<comment type="similarity">
    <text evidence="1">Belongs to the bacterial ribosomal protein bL9 family.</text>
</comment>
<gene>
    <name evidence="1" type="primary">rplI</name>
    <name type="ordered locus">LSEI_0116</name>
</gene>
<feature type="chain" id="PRO_1000014796" description="Large ribosomal subunit protein bL9">
    <location>
        <begin position="1"/>
        <end position="151"/>
    </location>
</feature>
<dbReference type="EMBL" id="CP000423">
    <property type="protein sequence ID" value="ABJ68980.1"/>
    <property type="molecule type" value="Genomic_DNA"/>
</dbReference>
<dbReference type="RefSeq" id="WP_003562688.1">
    <property type="nucleotide sequence ID" value="NC_008526.1"/>
</dbReference>
<dbReference type="RefSeq" id="YP_805422.1">
    <property type="nucleotide sequence ID" value="NC_008526.1"/>
</dbReference>
<dbReference type="SMR" id="Q03CU2"/>
<dbReference type="STRING" id="321967.LSEI_0116"/>
<dbReference type="PaxDb" id="321967-LSEI_0116"/>
<dbReference type="GeneID" id="57088853"/>
<dbReference type="KEGG" id="lca:LSEI_0116"/>
<dbReference type="PATRIC" id="fig|321967.11.peg.137"/>
<dbReference type="HOGENOM" id="CLU_078938_3_2_9"/>
<dbReference type="Proteomes" id="UP000001651">
    <property type="component" value="Chromosome"/>
</dbReference>
<dbReference type="GO" id="GO:1990904">
    <property type="term" value="C:ribonucleoprotein complex"/>
    <property type="evidence" value="ECO:0007669"/>
    <property type="project" value="UniProtKB-KW"/>
</dbReference>
<dbReference type="GO" id="GO:0005840">
    <property type="term" value="C:ribosome"/>
    <property type="evidence" value="ECO:0007669"/>
    <property type="project" value="UniProtKB-KW"/>
</dbReference>
<dbReference type="GO" id="GO:0019843">
    <property type="term" value="F:rRNA binding"/>
    <property type="evidence" value="ECO:0007669"/>
    <property type="project" value="UniProtKB-UniRule"/>
</dbReference>
<dbReference type="GO" id="GO:0003735">
    <property type="term" value="F:structural constituent of ribosome"/>
    <property type="evidence" value="ECO:0007669"/>
    <property type="project" value="InterPro"/>
</dbReference>
<dbReference type="GO" id="GO:0006412">
    <property type="term" value="P:translation"/>
    <property type="evidence" value="ECO:0007669"/>
    <property type="project" value="UniProtKB-UniRule"/>
</dbReference>
<dbReference type="FunFam" id="3.40.5.10:FF:000002">
    <property type="entry name" value="50S ribosomal protein L9"/>
    <property type="match status" value="1"/>
</dbReference>
<dbReference type="Gene3D" id="3.10.430.100">
    <property type="entry name" value="Ribosomal protein L9, C-terminal domain"/>
    <property type="match status" value="1"/>
</dbReference>
<dbReference type="Gene3D" id="3.40.5.10">
    <property type="entry name" value="Ribosomal protein L9, N-terminal domain"/>
    <property type="match status" value="1"/>
</dbReference>
<dbReference type="HAMAP" id="MF_00503">
    <property type="entry name" value="Ribosomal_bL9"/>
    <property type="match status" value="1"/>
</dbReference>
<dbReference type="InterPro" id="IPR000244">
    <property type="entry name" value="Ribosomal_bL9"/>
</dbReference>
<dbReference type="InterPro" id="IPR009027">
    <property type="entry name" value="Ribosomal_bL9/RNase_H1_N"/>
</dbReference>
<dbReference type="InterPro" id="IPR020594">
    <property type="entry name" value="Ribosomal_bL9_bac/chp"/>
</dbReference>
<dbReference type="InterPro" id="IPR020069">
    <property type="entry name" value="Ribosomal_bL9_C"/>
</dbReference>
<dbReference type="InterPro" id="IPR036791">
    <property type="entry name" value="Ribosomal_bL9_C_sf"/>
</dbReference>
<dbReference type="InterPro" id="IPR020070">
    <property type="entry name" value="Ribosomal_bL9_N"/>
</dbReference>
<dbReference type="InterPro" id="IPR036935">
    <property type="entry name" value="Ribosomal_bL9_N_sf"/>
</dbReference>
<dbReference type="NCBIfam" id="TIGR00158">
    <property type="entry name" value="L9"/>
    <property type="match status" value="1"/>
</dbReference>
<dbReference type="PANTHER" id="PTHR21368">
    <property type="entry name" value="50S RIBOSOMAL PROTEIN L9"/>
    <property type="match status" value="1"/>
</dbReference>
<dbReference type="Pfam" id="PF03948">
    <property type="entry name" value="Ribosomal_L9_C"/>
    <property type="match status" value="1"/>
</dbReference>
<dbReference type="Pfam" id="PF01281">
    <property type="entry name" value="Ribosomal_L9_N"/>
    <property type="match status" value="1"/>
</dbReference>
<dbReference type="SUPFAM" id="SSF55658">
    <property type="entry name" value="L9 N-domain-like"/>
    <property type="match status" value="1"/>
</dbReference>
<dbReference type="SUPFAM" id="SSF55653">
    <property type="entry name" value="Ribosomal protein L9 C-domain"/>
    <property type="match status" value="1"/>
</dbReference>
<dbReference type="PROSITE" id="PS00651">
    <property type="entry name" value="RIBOSOMAL_L9"/>
    <property type="match status" value="1"/>
</dbReference>
<protein>
    <recommendedName>
        <fullName evidence="1">Large ribosomal subunit protein bL9</fullName>
    </recommendedName>
    <alternativeName>
        <fullName evidence="2">50S ribosomal protein L9</fullName>
    </alternativeName>
</protein>
<reference key="1">
    <citation type="journal article" date="2006" name="Proc. Natl. Acad. Sci. U.S.A.">
        <title>Comparative genomics of the lactic acid bacteria.</title>
        <authorList>
            <person name="Makarova K.S."/>
            <person name="Slesarev A."/>
            <person name="Wolf Y.I."/>
            <person name="Sorokin A."/>
            <person name="Mirkin B."/>
            <person name="Koonin E.V."/>
            <person name="Pavlov A."/>
            <person name="Pavlova N."/>
            <person name="Karamychev V."/>
            <person name="Polouchine N."/>
            <person name="Shakhova V."/>
            <person name="Grigoriev I."/>
            <person name="Lou Y."/>
            <person name="Rohksar D."/>
            <person name="Lucas S."/>
            <person name="Huang K."/>
            <person name="Goodstein D.M."/>
            <person name="Hawkins T."/>
            <person name="Plengvidhya V."/>
            <person name="Welker D."/>
            <person name="Hughes J."/>
            <person name="Goh Y."/>
            <person name="Benson A."/>
            <person name="Baldwin K."/>
            <person name="Lee J.-H."/>
            <person name="Diaz-Muniz I."/>
            <person name="Dosti B."/>
            <person name="Smeianov V."/>
            <person name="Wechter W."/>
            <person name="Barabote R."/>
            <person name="Lorca G."/>
            <person name="Altermann E."/>
            <person name="Barrangou R."/>
            <person name="Ganesan B."/>
            <person name="Xie Y."/>
            <person name="Rawsthorne H."/>
            <person name="Tamir D."/>
            <person name="Parker C."/>
            <person name="Breidt F."/>
            <person name="Broadbent J.R."/>
            <person name="Hutkins R."/>
            <person name="O'Sullivan D."/>
            <person name="Steele J."/>
            <person name="Unlu G."/>
            <person name="Saier M.H. Jr."/>
            <person name="Klaenhammer T."/>
            <person name="Richardson P."/>
            <person name="Kozyavkin S."/>
            <person name="Weimer B.C."/>
            <person name="Mills D.A."/>
        </authorList>
    </citation>
    <scope>NUCLEOTIDE SEQUENCE [LARGE SCALE GENOMIC DNA]</scope>
    <source>
        <strain>ATCC 334 / BCRC 17002 / CCUG 31169 / CIP 107868 / KCTC 3260 / NRRL B-441</strain>
    </source>
</reference>
<accession>Q03CU2</accession>
<proteinExistence type="inferred from homology"/>
<organism>
    <name type="scientific">Lacticaseibacillus paracasei (strain ATCC 334 / BCRC 17002 / CCUG 31169 / CIP 107868 / KCTC 3260 / NRRL B-441)</name>
    <name type="common">Lactobacillus paracasei</name>
    <dbReference type="NCBI Taxonomy" id="321967"/>
    <lineage>
        <taxon>Bacteria</taxon>
        <taxon>Bacillati</taxon>
        <taxon>Bacillota</taxon>
        <taxon>Bacilli</taxon>
        <taxon>Lactobacillales</taxon>
        <taxon>Lactobacillaceae</taxon>
        <taxon>Lacticaseibacillus</taxon>
    </lineage>
</organism>
<keyword id="KW-1185">Reference proteome</keyword>
<keyword id="KW-0687">Ribonucleoprotein</keyword>
<keyword id="KW-0689">Ribosomal protein</keyword>
<keyword id="KW-0694">RNA-binding</keyword>
<keyword id="KW-0699">rRNA-binding</keyword>
<evidence type="ECO:0000255" key="1">
    <source>
        <dbReference type="HAMAP-Rule" id="MF_00503"/>
    </source>
</evidence>
<evidence type="ECO:0000305" key="2"/>
<name>RL9_LACP3</name>
<sequence length="151" mass="16962">MKVIFTQDVRGKGNRGQVKEVPDGYAENFLIRKGLAKAATPQAMSALRGQQRLEEKKEAEKKTEAEAMKAKIEDDKTVVQIQSKAGEDSRLFGSIPSKQIAQALDKQYQIKVDKRKIDLKQPIRSLGFTNVTVNLFPGIDARIRVHVIEQK</sequence>